<feature type="chain" id="PRO_0000372240" description="Putative antiporter subunit mnhD2">
    <location>
        <begin position="1"/>
        <end position="498"/>
    </location>
</feature>
<feature type="transmembrane region" description="Helical" evidence="2">
    <location>
        <begin position="2"/>
        <end position="22"/>
    </location>
</feature>
<feature type="transmembrane region" description="Helical" evidence="2">
    <location>
        <begin position="32"/>
        <end position="52"/>
    </location>
</feature>
<feature type="transmembrane region" description="Helical" evidence="2">
    <location>
        <begin position="78"/>
        <end position="98"/>
    </location>
</feature>
<feature type="transmembrane region" description="Helical" evidence="2">
    <location>
        <begin position="108"/>
        <end position="128"/>
    </location>
</feature>
<feature type="transmembrane region" description="Helical" evidence="2">
    <location>
        <begin position="130"/>
        <end position="150"/>
    </location>
</feature>
<feature type="transmembrane region" description="Helical" evidence="2">
    <location>
        <begin position="161"/>
        <end position="181"/>
    </location>
</feature>
<feature type="transmembrane region" description="Helical" evidence="2">
    <location>
        <begin position="209"/>
        <end position="229"/>
    </location>
</feature>
<feature type="transmembrane region" description="Helical" evidence="2">
    <location>
        <begin position="240"/>
        <end position="260"/>
    </location>
</feature>
<feature type="transmembrane region" description="Helical" evidence="2">
    <location>
        <begin position="271"/>
        <end position="291"/>
    </location>
</feature>
<feature type="transmembrane region" description="Helical" evidence="2">
    <location>
        <begin position="308"/>
        <end position="328"/>
    </location>
</feature>
<feature type="transmembrane region" description="Helical" evidence="2">
    <location>
        <begin position="330"/>
        <end position="350"/>
    </location>
</feature>
<feature type="transmembrane region" description="Helical" evidence="2">
    <location>
        <begin position="369"/>
        <end position="389"/>
    </location>
</feature>
<feature type="transmembrane region" description="Helical" evidence="2">
    <location>
        <begin position="403"/>
        <end position="423"/>
    </location>
</feature>
<feature type="transmembrane region" description="Helical" evidence="2">
    <location>
        <begin position="451"/>
        <end position="471"/>
    </location>
</feature>
<gene>
    <name type="primary">mnhD2</name>
    <name type="synonym">mrpD2</name>
    <name type="ordered locus">NWMN_0596</name>
</gene>
<organism>
    <name type="scientific">Staphylococcus aureus (strain Newman)</name>
    <dbReference type="NCBI Taxonomy" id="426430"/>
    <lineage>
        <taxon>Bacteria</taxon>
        <taxon>Bacillati</taxon>
        <taxon>Bacillota</taxon>
        <taxon>Bacilli</taxon>
        <taxon>Bacillales</taxon>
        <taxon>Staphylococcaceae</taxon>
        <taxon>Staphylococcus</taxon>
    </lineage>
</organism>
<sequence>MLSNLLILPMLLPFLCALILVFLKNNDRISKYLYLGTMTITTIISLMLLIYVQRHRPITLDFGGWSAPFGIQFLGDSLSLIMVTTASFVITLIMAYGFGRGEHKANRYHLPSFILFLSVGVIGSFLTSDLFNLYVMFEIMLLASFVLITLGQSVEQLRAAIIYVVLNIIGSWLFLLGIGLLYKTVGTLNFSHIAMRLNDMGDNRTVTMISLIFLVAFSAKAALVLFMWLPKAYAVLNTELAALFAALMTKVGAYALIRFFTLLFDQHNDLIHPLLATMAAITMVIGAIGVIAYKDIKKIAAYQVIISIGFIILGLGTNTFAGINGAIFYLVNDIVVKTLLFFIIGSLVYITGYRQYQYLNGLAKKEPLFGVAFIIMIFAIGGVPPFSGFPGKVLIFQGALQNGNYIGLALMIITSLIAMYSLFRILFYMYFGDKDGEEVNFKKIPLYRKRILSILVVVVIAIGIAAPVVLNVTSDATELNTSDQLYQKLVNPHLKGED</sequence>
<accession>A6QET6</accession>
<dbReference type="EMBL" id="AP009351">
    <property type="protein sequence ID" value="BAF66868.1"/>
    <property type="molecule type" value="Genomic_DNA"/>
</dbReference>
<dbReference type="RefSeq" id="WP_000950548.1">
    <property type="nucleotide sequence ID" value="NZ_JBBIAE010000002.1"/>
</dbReference>
<dbReference type="SMR" id="A6QET6"/>
<dbReference type="KEGG" id="sae:NWMN_0596"/>
<dbReference type="HOGENOM" id="CLU_007100_9_2_9"/>
<dbReference type="Proteomes" id="UP000006386">
    <property type="component" value="Chromosome"/>
</dbReference>
<dbReference type="GO" id="GO:0005886">
    <property type="term" value="C:plasma membrane"/>
    <property type="evidence" value="ECO:0007669"/>
    <property type="project" value="UniProtKB-SubCell"/>
</dbReference>
<dbReference type="GO" id="GO:0015297">
    <property type="term" value="F:antiporter activity"/>
    <property type="evidence" value="ECO:0007669"/>
    <property type="project" value="UniProtKB-KW"/>
</dbReference>
<dbReference type="GO" id="GO:0008137">
    <property type="term" value="F:NADH dehydrogenase (ubiquinone) activity"/>
    <property type="evidence" value="ECO:0007669"/>
    <property type="project" value="InterPro"/>
</dbReference>
<dbReference type="GO" id="GO:0042773">
    <property type="term" value="P:ATP synthesis coupled electron transport"/>
    <property type="evidence" value="ECO:0007669"/>
    <property type="project" value="InterPro"/>
</dbReference>
<dbReference type="InterPro" id="IPR050586">
    <property type="entry name" value="CPA3_Na-H_Antiporter_D"/>
</dbReference>
<dbReference type="InterPro" id="IPR003918">
    <property type="entry name" value="NADH_UbQ_OxRdtase"/>
</dbReference>
<dbReference type="InterPro" id="IPR001750">
    <property type="entry name" value="ND/Mrp_TM"/>
</dbReference>
<dbReference type="NCBIfam" id="NF009306">
    <property type="entry name" value="PRK12663.1"/>
    <property type="match status" value="1"/>
</dbReference>
<dbReference type="PANTHER" id="PTHR42703:SF1">
    <property type="entry name" value="NA(+)_H(+) ANTIPORTER SUBUNIT D1"/>
    <property type="match status" value="1"/>
</dbReference>
<dbReference type="PANTHER" id="PTHR42703">
    <property type="entry name" value="NADH DEHYDROGENASE"/>
    <property type="match status" value="1"/>
</dbReference>
<dbReference type="Pfam" id="PF00361">
    <property type="entry name" value="Proton_antipo_M"/>
    <property type="match status" value="1"/>
</dbReference>
<dbReference type="PRINTS" id="PR01437">
    <property type="entry name" value="NUOXDRDTASE4"/>
</dbReference>
<name>MNHD2_STAAE</name>
<comment type="subunit">
    <text evidence="1">May form a heterooligomeric complex that consists of seven subunits: mnhA2, mnhB2, mnhC2, mnhD2, mnhE2, mnhF2 and mnhG2.</text>
</comment>
<comment type="subcellular location">
    <subcellularLocation>
        <location evidence="3">Cell membrane</location>
        <topology evidence="3">Multi-pass membrane protein</topology>
    </subcellularLocation>
</comment>
<comment type="similarity">
    <text evidence="3">Belongs to the CPA3 antiporters (TC 2.A.63) subunit D family.</text>
</comment>
<proteinExistence type="inferred from homology"/>
<protein>
    <recommendedName>
        <fullName>Putative antiporter subunit mnhD2</fullName>
    </recommendedName>
    <alternativeName>
        <fullName>Mrp complex subunit D2</fullName>
    </alternativeName>
    <alternativeName>
        <fullName>Putative NADH-ubiquinone oxidoreductase subunit mnhD2</fullName>
    </alternativeName>
</protein>
<keyword id="KW-0050">Antiport</keyword>
<keyword id="KW-1003">Cell membrane</keyword>
<keyword id="KW-0406">Ion transport</keyword>
<keyword id="KW-0472">Membrane</keyword>
<keyword id="KW-0812">Transmembrane</keyword>
<keyword id="KW-1133">Transmembrane helix</keyword>
<keyword id="KW-0813">Transport</keyword>
<evidence type="ECO:0000250" key="1"/>
<evidence type="ECO:0000255" key="2"/>
<evidence type="ECO:0000305" key="3"/>
<reference key="1">
    <citation type="journal article" date="2008" name="J. Bacteriol.">
        <title>Genome sequence of Staphylococcus aureus strain Newman and comparative analysis of staphylococcal genomes: polymorphism and evolution of two major pathogenicity islands.</title>
        <authorList>
            <person name="Baba T."/>
            <person name="Bae T."/>
            <person name="Schneewind O."/>
            <person name="Takeuchi F."/>
            <person name="Hiramatsu K."/>
        </authorList>
    </citation>
    <scope>NUCLEOTIDE SEQUENCE [LARGE SCALE GENOMIC DNA]</scope>
    <source>
        <strain>Newman</strain>
    </source>
</reference>